<gene>
    <name evidence="1" type="primary">miaA</name>
    <name type="ordered locus">CT_766</name>
</gene>
<name>MIAA_CHLTR</name>
<keyword id="KW-0067">ATP-binding</keyword>
<keyword id="KW-0460">Magnesium</keyword>
<keyword id="KW-0547">Nucleotide-binding</keyword>
<keyword id="KW-1185">Reference proteome</keyword>
<keyword id="KW-0808">Transferase</keyword>
<keyword id="KW-0819">tRNA processing</keyword>
<comment type="function">
    <text evidence="1">Catalyzes the transfer of a dimethylallyl group onto the adenine at position 37 in tRNAs that read codons beginning with uridine, leading to the formation of N6-(dimethylallyl)adenosine (i(6)A).</text>
</comment>
<comment type="catalytic activity">
    <reaction evidence="1">
        <text>adenosine(37) in tRNA + dimethylallyl diphosphate = N(6)-dimethylallyladenosine(37) in tRNA + diphosphate</text>
        <dbReference type="Rhea" id="RHEA:26482"/>
        <dbReference type="Rhea" id="RHEA-COMP:10162"/>
        <dbReference type="Rhea" id="RHEA-COMP:10375"/>
        <dbReference type="ChEBI" id="CHEBI:33019"/>
        <dbReference type="ChEBI" id="CHEBI:57623"/>
        <dbReference type="ChEBI" id="CHEBI:74411"/>
        <dbReference type="ChEBI" id="CHEBI:74415"/>
        <dbReference type="EC" id="2.5.1.75"/>
    </reaction>
</comment>
<comment type="cofactor">
    <cofactor evidence="1">
        <name>Mg(2+)</name>
        <dbReference type="ChEBI" id="CHEBI:18420"/>
    </cofactor>
</comment>
<comment type="subunit">
    <text evidence="1">Monomer.</text>
</comment>
<comment type="similarity">
    <text evidence="1">Belongs to the IPP transferase family.</text>
</comment>
<comment type="sequence caution" evidence="2">
    <conflict type="erroneous initiation">
        <sequence resource="EMBL-CDS" id="AAC68361"/>
    </conflict>
</comment>
<protein>
    <recommendedName>
        <fullName evidence="1">tRNA dimethylallyltransferase</fullName>
        <ecNumber evidence="1">2.5.1.75</ecNumber>
    </recommendedName>
    <alternativeName>
        <fullName evidence="1">Dimethylallyl diphosphate:tRNA dimethylallyltransferase</fullName>
        <shortName evidence="1">DMAPP:tRNA dimethylallyltransferase</shortName>
        <shortName evidence="1">DMATase</shortName>
    </alternativeName>
    <alternativeName>
        <fullName evidence="1">Isopentenyl-diphosphate:tRNA isopentenyltransferase</fullName>
        <shortName evidence="1">IPP transferase</shortName>
        <shortName evidence="1">IPPT</shortName>
        <shortName evidence="1">IPTase</shortName>
    </alternativeName>
</protein>
<proteinExistence type="inferred from homology"/>
<organism>
    <name type="scientific">Chlamydia trachomatis serovar D (strain ATCC VR-885 / DSM 19411 / UW-3/Cx)</name>
    <dbReference type="NCBI Taxonomy" id="272561"/>
    <lineage>
        <taxon>Bacteria</taxon>
        <taxon>Pseudomonadati</taxon>
        <taxon>Chlamydiota</taxon>
        <taxon>Chlamydiia</taxon>
        <taxon>Chlamydiales</taxon>
        <taxon>Chlamydiaceae</taxon>
        <taxon>Chlamydia/Chlamydophila group</taxon>
        <taxon>Chlamydia</taxon>
    </lineage>
</organism>
<evidence type="ECO:0000255" key="1">
    <source>
        <dbReference type="HAMAP-Rule" id="MF_00185"/>
    </source>
</evidence>
<evidence type="ECO:0000305" key="2"/>
<sequence length="314" mass="35639">MFKRTVILLAGPTGSGKTAVSLKLAPLVDGEIISVDSMQVYQGMDIGTAKVSLTDRKEVPHHLIDVCHVQESFNAVDFYYHAVQACQDILSRNKVPILVGGTGFYFHTFLSGPPSGPSPDFVLREQLTLEAQERGISALYQELELLDPVYAATITKHDKNKIIRALEIIRKTGSKVSSYAWQSTVNESKEYHCRRWLLSPDPELLRHNILERCDQMLEEGLLDEVQALLAAGIKGNSSASRAIGYREWIEFLDLGSPPDLFEITKQKFITNTWRYTKKQRTWFKRYSLFRELRPMGMTLDDMAKKIAQDYFLCG</sequence>
<dbReference type="EC" id="2.5.1.75" evidence="1"/>
<dbReference type="EMBL" id="AE001273">
    <property type="protein sequence ID" value="AAC68361.1"/>
    <property type="status" value="ALT_INIT"/>
    <property type="molecule type" value="Genomic_DNA"/>
</dbReference>
<dbReference type="PIR" id="A71473">
    <property type="entry name" value="A71473"/>
</dbReference>
<dbReference type="RefSeq" id="NP_220285.1">
    <property type="nucleotide sequence ID" value="NC_000117.1"/>
</dbReference>
<dbReference type="SMR" id="O84771"/>
<dbReference type="FunCoup" id="O84771">
    <property type="interactions" value="256"/>
</dbReference>
<dbReference type="STRING" id="272561.CT_766"/>
<dbReference type="EnsemblBacteria" id="AAC68361">
    <property type="protein sequence ID" value="AAC68361"/>
    <property type="gene ID" value="CT_766"/>
</dbReference>
<dbReference type="GeneID" id="884567"/>
<dbReference type="KEGG" id="ctr:CT_766"/>
<dbReference type="PATRIC" id="fig|272561.5.peg.841"/>
<dbReference type="HOGENOM" id="CLU_032616_0_2_0"/>
<dbReference type="InParanoid" id="O84771"/>
<dbReference type="OrthoDB" id="9776390at2"/>
<dbReference type="Proteomes" id="UP000000431">
    <property type="component" value="Chromosome"/>
</dbReference>
<dbReference type="GO" id="GO:0005524">
    <property type="term" value="F:ATP binding"/>
    <property type="evidence" value="ECO:0007669"/>
    <property type="project" value="UniProtKB-UniRule"/>
</dbReference>
<dbReference type="GO" id="GO:0052381">
    <property type="term" value="F:tRNA dimethylallyltransferase activity"/>
    <property type="evidence" value="ECO:0000318"/>
    <property type="project" value="GO_Central"/>
</dbReference>
<dbReference type="GO" id="GO:0006400">
    <property type="term" value="P:tRNA modification"/>
    <property type="evidence" value="ECO:0000318"/>
    <property type="project" value="GO_Central"/>
</dbReference>
<dbReference type="Gene3D" id="1.10.20.140">
    <property type="match status" value="1"/>
</dbReference>
<dbReference type="Gene3D" id="3.40.50.300">
    <property type="entry name" value="P-loop containing nucleotide triphosphate hydrolases"/>
    <property type="match status" value="1"/>
</dbReference>
<dbReference type="HAMAP" id="MF_00185">
    <property type="entry name" value="IPP_trans"/>
    <property type="match status" value="1"/>
</dbReference>
<dbReference type="InterPro" id="IPR039657">
    <property type="entry name" value="Dimethylallyltransferase"/>
</dbReference>
<dbReference type="InterPro" id="IPR018022">
    <property type="entry name" value="IPT"/>
</dbReference>
<dbReference type="InterPro" id="IPR027417">
    <property type="entry name" value="P-loop_NTPase"/>
</dbReference>
<dbReference type="NCBIfam" id="TIGR00174">
    <property type="entry name" value="miaA"/>
    <property type="match status" value="1"/>
</dbReference>
<dbReference type="PANTHER" id="PTHR11088">
    <property type="entry name" value="TRNA DIMETHYLALLYLTRANSFERASE"/>
    <property type="match status" value="1"/>
</dbReference>
<dbReference type="PANTHER" id="PTHR11088:SF60">
    <property type="entry name" value="TRNA DIMETHYLALLYLTRANSFERASE"/>
    <property type="match status" value="1"/>
</dbReference>
<dbReference type="Pfam" id="PF01715">
    <property type="entry name" value="IPPT"/>
    <property type="match status" value="1"/>
</dbReference>
<dbReference type="SUPFAM" id="SSF52540">
    <property type="entry name" value="P-loop containing nucleoside triphosphate hydrolases"/>
    <property type="match status" value="2"/>
</dbReference>
<accession>O84771</accession>
<reference key="1">
    <citation type="journal article" date="1998" name="Science">
        <title>Genome sequence of an obligate intracellular pathogen of humans: Chlamydia trachomatis.</title>
        <authorList>
            <person name="Stephens R.S."/>
            <person name="Kalman S."/>
            <person name="Lammel C.J."/>
            <person name="Fan J."/>
            <person name="Marathe R."/>
            <person name="Aravind L."/>
            <person name="Mitchell W.P."/>
            <person name="Olinger L."/>
            <person name="Tatusov R.L."/>
            <person name="Zhao Q."/>
            <person name="Koonin E.V."/>
            <person name="Davis R.W."/>
        </authorList>
    </citation>
    <scope>NUCLEOTIDE SEQUENCE [LARGE SCALE GENOMIC DNA]</scope>
    <source>
        <strain>ATCC VR-885 / DSM 19411 / UW-3/Cx</strain>
    </source>
</reference>
<feature type="chain" id="PRO_0000163901" description="tRNA dimethylallyltransferase">
    <location>
        <begin position="1"/>
        <end position="314"/>
    </location>
</feature>
<feature type="region of interest" description="Interaction with substrate tRNA" evidence="1">
    <location>
        <begin position="36"/>
        <end position="39"/>
    </location>
</feature>
<feature type="binding site" evidence="1">
    <location>
        <begin position="11"/>
        <end position="18"/>
    </location>
    <ligand>
        <name>ATP</name>
        <dbReference type="ChEBI" id="CHEBI:30616"/>
    </ligand>
</feature>
<feature type="binding site" evidence="1">
    <location>
        <begin position="13"/>
        <end position="18"/>
    </location>
    <ligand>
        <name>substrate</name>
    </ligand>
</feature>
<feature type="site" description="Interaction with substrate tRNA" evidence="1">
    <location>
        <position position="102"/>
    </location>
</feature>
<feature type="site" description="Interaction with substrate tRNA" evidence="1">
    <location>
        <position position="124"/>
    </location>
</feature>